<proteinExistence type="evidence at protein level"/>
<evidence type="ECO:0000250" key="1"/>
<evidence type="ECO:0000250" key="2">
    <source>
        <dbReference type="UniProtKB" id="P54753"/>
    </source>
</evidence>
<evidence type="ECO:0000250" key="3">
    <source>
        <dbReference type="UniProtKB" id="Q8CBF3"/>
    </source>
</evidence>
<evidence type="ECO:0000255" key="4"/>
<evidence type="ECO:0000255" key="5">
    <source>
        <dbReference type="PROSITE-ProRule" id="PRU00159"/>
    </source>
</evidence>
<evidence type="ECO:0000255" key="6">
    <source>
        <dbReference type="PROSITE-ProRule" id="PRU00184"/>
    </source>
</evidence>
<evidence type="ECO:0000255" key="7">
    <source>
        <dbReference type="PROSITE-ProRule" id="PRU00316"/>
    </source>
</evidence>
<evidence type="ECO:0000255" key="8">
    <source>
        <dbReference type="PROSITE-ProRule" id="PRU00883"/>
    </source>
</evidence>
<evidence type="ECO:0000255" key="9">
    <source>
        <dbReference type="PROSITE-ProRule" id="PRU10028"/>
    </source>
</evidence>
<evidence type="ECO:0000269" key="10">
    <source>
    </source>
</evidence>
<evidence type="ECO:0000269" key="11">
    <source>
    </source>
</evidence>
<evidence type="ECO:0000269" key="12">
    <source>
    </source>
</evidence>
<evidence type="ECO:0000269" key="13">
    <source>
    </source>
</evidence>
<evidence type="ECO:0000269" key="14">
    <source>
    </source>
</evidence>
<evidence type="ECO:0000269" key="15">
    <source>
    </source>
</evidence>
<evidence type="ECO:0000269" key="16">
    <source>
    </source>
</evidence>
<evidence type="ECO:0000269" key="17">
    <source>
    </source>
</evidence>
<evidence type="ECO:0000269" key="18">
    <source>
    </source>
</evidence>
<evidence type="ECO:0000303" key="19">
    <source>
    </source>
</evidence>
<evidence type="ECO:0000303" key="20">
    <source>
    </source>
</evidence>
<evidence type="ECO:0000305" key="21"/>
<evidence type="ECO:0007829" key="22">
    <source>
        <dbReference type="PDB" id="2DJS"/>
    </source>
</evidence>
<evidence type="ECO:0007829" key="23">
    <source>
        <dbReference type="PDB" id="2EAO"/>
    </source>
</evidence>
<evidence type="ECO:0007829" key="24">
    <source>
        <dbReference type="PDB" id="3ZFX"/>
    </source>
</evidence>
<evidence type="ECO:0007829" key="25">
    <source>
        <dbReference type="PDB" id="5MJB"/>
    </source>
</evidence>
<evidence type="ECO:0007829" key="26">
    <source>
        <dbReference type="PDB" id="7KPM"/>
    </source>
</evidence>
<keyword id="KW-0002">3D-structure</keyword>
<keyword id="KW-0025">Alternative splicing</keyword>
<keyword id="KW-0067">ATP-binding</keyword>
<keyword id="KW-0130">Cell adhesion</keyword>
<keyword id="KW-1003">Cell membrane</keyword>
<keyword id="KW-0966">Cell projection</keyword>
<keyword id="KW-0903">Direct protein sequencing</keyword>
<keyword id="KW-0967">Endosome</keyword>
<keyword id="KW-0325">Glycoprotein</keyword>
<keyword id="KW-0418">Kinase</keyword>
<keyword id="KW-0472">Membrane</keyword>
<keyword id="KW-0524">Neurogenesis</keyword>
<keyword id="KW-0547">Nucleotide-binding</keyword>
<keyword id="KW-0597">Phosphoprotein</keyword>
<keyword id="KW-1267">Proteomics identification</keyword>
<keyword id="KW-0675">Receptor</keyword>
<keyword id="KW-1185">Reference proteome</keyword>
<keyword id="KW-0677">Repeat</keyword>
<keyword id="KW-0732">Signal</keyword>
<keyword id="KW-0808">Transferase</keyword>
<keyword id="KW-0812">Transmembrane</keyword>
<keyword id="KW-1133">Transmembrane helix</keyword>
<keyword id="KW-0829">Tyrosine-protein kinase</keyword>
<keyword id="KW-0832">Ubl conjugation</keyword>
<protein>
    <recommendedName>
        <fullName>Ephrin type-B receptor 1</fullName>
        <ecNumber>2.7.10.1</ecNumber>
    </recommendedName>
    <alternativeName>
        <fullName>ELK</fullName>
    </alternativeName>
    <alternativeName>
        <fullName>EPH tyrosine kinase 2</fullName>
    </alternativeName>
    <alternativeName>
        <fullName>EPH-like kinase 6</fullName>
        <shortName>EK6</shortName>
        <shortName>hEK6</shortName>
    </alternativeName>
    <alternativeName>
        <fullName>Neuronally-expressed EPH-related tyrosine kinase</fullName>
        <shortName>NET</shortName>
    </alternativeName>
    <alternativeName>
        <fullName>Tyrosine-protein kinase receptor EPH-2</fullName>
    </alternativeName>
</protein>
<sequence>MALDYLLLLLLASAVAAMEETLMDTRTATAELGWTANPASGWEEVSGYDENLNTIRTYQVCNVFEPNQNNWLLTTFINRRGAHRIYTEMRFTVRDCSSLPNVPGSCKETFNLYYYETDSVIATKKSAFWSEAPYLKVDTIAADESFSQVDFGGRLMKVNTEVRSFGPLTRNGFYLAFQDYGACMSLLSVRVFFKKCPSIVQNFAVFPETMTGAESTSLVIARGTCIPNAEEVDVPIKLYCNGDGEWMVPIGRCTCKPGYEPENSVACKACPAGTFKASQEAEGCSHCPSNSRSPAEASPICTCRTGYYRADFDPPEVACTSVPSGPRNVISIVNETSIILEWHPPRETGGRDDVTYNIICKKCRADRRSCSRCDDNVEFVPRQLGLTECRVSISSLWAHTPYTFDIQAINGVSSKSPFPPQHVSVNITTNQAAPSTVPIMHQVSATMRSITLSWPQPEQPNGIILDYEIRYYEKEHNEFNSSMARSQTNTARIDGLRPGMVYVVQVRARTVAGYGKFSGKMCFQTLTDDDYKSELREQLPLIAGSAAAGVVFVVSLVAISIVCSRKRAYSKEAVYSDKLQHYSTGRGSPGMKIYIDPFTYEDPNEAVREFAKEIDVSFVKIEEVIGAGEFGEVYKGRLKLPGKREIYVAIKTLKAGYSEKQRRDFLSEASIMGQFDHPNIIRLEGVVTKSRPVMIITEFMENGALDSFLRQNDGQFTVIQLVGMLRGIAAGMKYLAEMNYVHRDLAARNILVNSNLVCKVSDFGLSRYLQDDTSDPTYTSSLGGKIPVRWTAPEAIAYRKFTSASDVWSYGIVMWEVMSFGERPYWDMSNQDVINAIEQDYRLPPPMDCPAALHQLMLDCWQKDRNSRPRFAEIVNTLDKMIRNPASLKTVATITAVPSQPLLDRSIPDFTAFTTVDDWLSAIKMVQYRDSFLTAGFTSLQLVTQMTSEDLLRIGITLAGHQKKILNSIHSMRVQISQSPTAMA</sequence>
<accession>P54762</accession>
<accession>A8K593</accession>
<accession>B3KTB2</accession>
<accession>B5A969</accession>
<accession>O43569</accession>
<accession>O95142</accession>
<accession>O95143</accession>
<accession>Q0VG87</accession>
<comment type="function">
    <text evidence="3 11 12 15 17 18">Receptor tyrosine kinase which binds promiscuously transmembrane ephrin-B family ligands residing on adjacent cells, leading to contact-dependent bidirectional signaling into neighboring cells. The signaling pathway downstream of the receptor is referred to as forward signaling while the signaling pathway downstream of the ephrin ligand is referred to as reverse signaling. Cognate/functional ephrin ligands for this receptor include EFNB1, EFNB2 and EFNB3. During nervous system development, regulates retinal axon guidance redirecting ipsilaterally ventrotemporal retinal ganglion cells axons at the optic chiasm midline. This probably requires repulsive interaction with EFNB2. In the adult nervous system together with EFNB3, regulates chemotaxis, proliferation and polarity of the hippocampus neural progenitors. In addition to its role in axon guidance also plays an important redundant role with other ephrin-B receptors in development and maturation of dendritic spines and synapse formation. May also regulate angiogenesis. More generally, may play a role in targeted cell migration and adhesion. Upon activation by EFNB1 and probably other ephrin-B ligands activates the MAPK/ERK and the JNK signaling cascades to regulate cell migration and adhesion respectively. Involved in the maintenance of the pool of satellite cells (muscle stem cells) by promoting their self-renewal and reducing their activation and differentiation (By similarity).</text>
</comment>
<comment type="catalytic activity">
    <reaction evidence="9">
        <text>L-tyrosyl-[protein] + ATP = O-phospho-L-tyrosyl-[protein] + ADP + H(+)</text>
        <dbReference type="Rhea" id="RHEA:10596"/>
        <dbReference type="Rhea" id="RHEA-COMP:10136"/>
        <dbReference type="Rhea" id="RHEA-COMP:20101"/>
        <dbReference type="ChEBI" id="CHEBI:15378"/>
        <dbReference type="ChEBI" id="CHEBI:30616"/>
        <dbReference type="ChEBI" id="CHEBI:46858"/>
        <dbReference type="ChEBI" id="CHEBI:61978"/>
        <dbReference type="ChEBI" id="CHEBI:456216"/>
        <dbReference type="EC" id="2.7.10.1"/>
    </reaction>
</comment>
<comment type="subunit">
    <text evidence="3 10 11 12 15 16 17 18">Heterotetramer upon binding of the ligand. The heterotetramer is composed of an ephrin dimer and a receptor dimer. Oligomerization is probably required to induce biological responses (By similarity). Interacts with EPHB6; transphosphorylates EPHB6 to form an active signaling complex. Interacts with PICK1 (By similarity). Interacts (through Tyr-594) with NCK1 (via SH2 domain); activates the JUN cascade to regulate cell adhesion (By similarity). The ligand-activated form interacts (through Tyr-928) with GRB7 and GRB10 (via SH2 domains). The ligand-activated form interacts (residues within the catalytic domain) with GRB2 (via SH2 domain). Interacts with GRB2, SHC1 and SRC; activates the MAPK/ERK cascade to regulate cell migration. Interacts with CBL; regulates receptor degradation through ubiquitination. Interacts with ACP1.</text>
</comment>
<comment type="interaction">
    <interactant intactId="EBI-80252">
        <id>P54762</id>
    </interactant>
    <interactant intactId="EBI-80275">
        <id>Q13322</id>
        <label>GRB10</label>
    </interactant>
    <organismsDiffer>false</organismsDiffer>
    <experiments>2</experiments>
</comment>
<comment type="interaction">
    <interactant intactId="EBI-80252">
        <id>P54762</id>
    </interactant>
    <interactant intactId="EBI-401755">
        <id>P62993</id>
        <label>GRB2</label>
    </interactant>
    <organismsDiffer>false</organismsDiffer>
    <experiments>2</experiments>
</comment>
<comment type="interaction">
    <interactant intactId="EBI-80252">
        <id>P54762</id>
    </interactant>
    <interactant intactId="EBI-970191">
        <id>Q14451</id>
        <label>GRB7</label>
    </interactant>
    <organismsDiffer>false</organismsDiffer>
    <experiments>4</experiments>
</comment>
<comment type="subcellular location">
    <subcellularLocation>
        <location evidence="15">Cell membrane</location>
        <topology evidence="15">Single-pass type I membrane protein</topology>
    </subcellularLocation>
    <subcellularLocation>
        <location evidence="15">Early endosome membrane</location>
    </subcellularLocation>
    <subcellularLocation>
        <location evidence="3">Cell projection</location>
        <location evidence="3">Dendrite</location>
    </subcellularLocation>
</comment>
<comment type="alternative products">
    <event type="alternative splicing"/>
    <isoform>
        <id>P54762-1</id>
        <name>1</name>
        <sequence type="displayed"/>
    </isoform>
    <isoform>
        <id>P54762-5</id>
        <name>2</name>
        <sequence type="described" ref="VSP_056017"/>
    </isoform>
    <isoform>
        <id>P54762-6</id>
        <name>3</name>
        <sequence type="described" ref="VSP_056018 VSP_056019"/>
    </isoform>
</comment>
<comment type="tissue specificity">
    <text>Preferentially expressed in brain.</text>
</comment>
<comment type="PTM">
    <text evidence="11 15 16">Phosphorylated. Autophosphorylation is stimulated by the ligand EFNB1. Required for interaction with SH2 domain-containing interactors, for activation of the MAPK/ERK and JUN signaling cascades and for ubiquitination by CBL.</text>
</comment>
<comment type="PTM">
    <text evidence="15">Ubiquitinated; (EFNB1)ligand-induced poly- and/or multi-ubiquitination by CBL is regulated by SRC and leads to lysosomal degradation.</text>
</comment>
<comment type="similarity">
    <text evidence="5">Belongs to the protein kinase superfamily. Tyr protein kinase family. Ephrin receptor subfamily.</text>
</comment>
<comment type="sequence caution" evidence="21">
    <conflict type="miscellaneous discrepancy">
        <sequence resource="EMBL-CDS" id="AAB94627"/>
    </conflict>
    <text>wrong intron-exon boundaries.</text>
</comment>
<comment type="sequence caution" evidence="21">
    <conflict type="miscellaneous discrepancy">
        <sequence resource="EMBL-CDS" id="AAB94628"/>
    </conflict>
    <text>wrong intron-exon boundaries.</text>
</comment>
<comment type="sequence caution" evidence="21">
    <conflict type="miscellaneous discrepancy">
        <sequence resource="EMBL-CDS" id="AAD02031"/>
    </conflict>
    <text>Chimeric cDNA.</text>
</comment>
<dbReference type="EC" id="2.7.10.1"/>
<dbReference type="EMBL" id="L40636">
    <property type="protein sequence ID" value="AAB08520.1"/>
    <property type="molecule type" value="mRNA"/>
</dbReference>
<dbReference type="EMBL" id="AF037331">
    <property type="protein sequence ID" value="AAD02030.1"/>
    <property type="molecule type" value="mRNA"/>
</dbReference>
<dbReference type="EMBL" id="AF037332">
    <property type="protein sequence ID" value="AAD02031.1"/>
    <property type="status" value="ALT_SEQ"/>
    <property type="molecule type" value="mRNA"/>
</dbReference>
<dbReference type="EMBL" id="AF037333">
    <property type="protein sequence ID" value="AAB94627.1"/>
    <property type="status" value="ALT_SEQ"/>
    <property type="molecule type" value="mRNA"/>
</dbReference>
<dbReference type="EMBL" id="AF037334">
    <property type="protein sequence ID" value="AAB94628.1"/>
    <property type="status" value="ALT_SEQ"/>
    <property type="molecule type" value="mRNA"/>
</dbReference>
<dbReference type="EMBL" id="EU826607">
    <property type="protein sequence ID" value="ACF47643.1"/>
    <property type="molecule type" value="mRNA"/>
</dbReference>
<dbReference type="EMBL" id="AK095305">
    <property type="protein sequence ID" value="BAG53024.1"/>
    <property type="molecule type" value="mRNA"/>
</dbReference>
<dbReference type="EMBL" id="AK291208">
    <property type="protein sequence ID" value="BAF83897.1"/>
    <property type="molecule type" value="mRNA"/>
</dbReference>
<dbReference type="EMBL" id="AC016931">
    <property type="status" value="NOT_ANNOTATED_CDS"/>
    <property type="molecule type" value="Genomic_DNA"/>
</dbReference>
<dbReference type="EMBL" id="AC016951">
    <property type="status" value="NOT_ANNOTATED_CDS"/>
    <property type="molecule type" value="Genomic_DNA"/>
</dbReference>
<dbReference type="EMBL" id="AC063918">
    <property type="status" value="NOT_ANNOTATED_CDS"/>
    <property type="molecule type" value="Genomic_DNA"/>
</dbReference>
<dbReference type="EMBL" id="AC073244">
    <property type="status" value="NOT_ANNOTATED_CDS"/>
    <property type="molecule type" value="Genomic_DNA"/>
</dbReference>
<dbReference type="EMBL" id="AC092969">
    <property type="status" value="NOT_ANNOTATED_CDS"/>
    <property type="molecule type" value="Genomic_DNA"/>
</dbReference>
<dbReference type="EMBL" id="BC111744">
    <property type="protein sequence ID" value="AAI11745.1"/>
    <property type="molecule type" value="mRNA"/>
</dbReference>
<dbReference type="CCDS" id="CCDS46921.1">
    <molecule id="P54762-1"/>
</dbReference>
<dbReference type="RefSeq" id="NP_004432.1">
    <molecule id="P54762-1"/>
    <property type="nucleotide sequence ID" value="NM_004441.5"/>
</dbReference>
<dbReference type="PDB" id="2DJS">
    <property type="method" value="NMR"/>
    <property type="chains" value="A=434-528"/>
</dbReference>
<dbReference type="PDB" id="2EAO">
    <property type="method" value="NMR"/>
    <property type="chains" value="A=899-984"/>
</dbReference>
<dbReference type="PDB" id="3ZFX">
    <property type="method" value="X-ray"/>
    <property type="resolution" value="2.50 A"/>
    <property type="chains" value="A/B/C/D/E/F/G/H/I=602-896"/>
</dbReference>
<dbReference type="PDB" id="5MJA">
    <property type="method" value="X-ray"/>
    <property type="resolution" value="2.14 A"/>
    <property type="chains" value="A/B=602-896"/>
</dbReference>
<dbReference type="PDB" id="5MJB">
    <property type="method" value="X-ray"/>
    <property type="resolution" value="2.23 A"/>
    <property type="chains" value="A/B=602-896"/>
</dbReference>
<dbReference type="PDB" id="6UMW">
    <property type="method" value="X-ray"/>
    <property type="resolution" value="1.98 A"/>
    <property type="chains" value="A=602-896"/>
</dbReference>
<dbReference type="PDB" id="7KPL">
    <property type="method" value="X-ray"/>
    <property type="resolution" value="2.71 A"/>
    <property type="chains" value="A=611-889"/>
</dbReference>
<dbReference type="PDB" id="7KPM">
    <property type="method" value="X-ray"/>
    <property type="resolution" value="1.61 A"/>
    <property type="chains" value="A=611-889"/>
</dbReference>
<dbReference type="PDBsum" id="2DJS"/>
<dbReference type="PDBsum" id="2EAO"/>
<dbReference type="PDBsum" id="3ZFX"/>
<dbReference type="PDBsum" id="5MJA"/>
<dbReference type="PDBsum" id="5MJB"/>
<dbReference type="PDBsum" id="6UMW"/>
<dbReference type="PDBsum" id="7KPL"/>
<dbReference type="PDBsum" id="7KPM"/>
<dbReference type="SMR" id="P54762"/>
<dbReference type="BioGRID" id="108361">
    <property type="interactions" value="22"/>
</dbReference>
<dbReference type="FunCoup" id="P54762">
    <property type="interactions" value="1441"/>
</dbReference>
<dbReference type="IntAct" id="P54762">
    <property type="interactions" value="31"/>
</dbReference>
<dbReference type="MINT" id="P54762"/>
<dbReference type="STRING" id="9606.ENSP00000381097"/>
<dbReference type="BindingDB" id="P54762"/>
<dbReference type="ChEMBL" id="CHEMBL5072"/>
<dbReference type="DrugBank" id="DB09093">
    <property type="generic name" value="Chlortetracycline"/>
</dbReference>
<dbReference type="DrugBank" id="DB12010">
    <property type="generic name" value="Fostamatinib"/>
</dbReference>
<dbReference type="DrugCentral" id="P54762"/>
<dbReference type="GuidetoPHARMACOLOGY" id="1830"/>
<dbReference type="GlyCosmos" id="P54762">
    <property type="glycosylation" value="3 sites, No reported glycans"/>
</dbReference>
<dbReference type="GlyGen" id="P54762">
    <property type="glycosylation" value="4 sites, 1 N-linked glycan (1 site)"/>
</dbReference>
<dbReference type="iPTMnet" id="P54762"/>
<dbReference type="PhosphoSitePlus" id="P54762"/>
<dbReference type="SwissPalm" id="P54762"/>
<dbReference type="BioMuta" id="EPHB1"/>
<dbReference type="DMDM" id="1706663"/>
<dbReference type="CPTAC" id="CPTAC-2920"/>
<dbReference type="CPTAC" id="CPTAC-2921"/>
<dbReference type="jPOST" id="P54762"/>
<dbReference type="MassIVE" id="P54762"/>
<dbReference type="PaxDb" id="9606-ENSP00000381097"/>
<dbReference type="PeptideAtlas" id="P54762"/>
<dbReference type="ProteomicsDB" id="3673"/>
<dbReference type="ProteomicsDB" id="56716">
    <molecule id="P54762-1"/>
</dbReference>
<dbReference type="Antibodypedia" id="33398">
    <property type="antibodies" value="561 antibodies from 40 providers"/>
</dbReference>
<dbReference type="DNASU" id="2047"/>
<dbReference type="Ensembl" id="ENST00000398015.8">
    <molecule id="P54762-1"/>
    <property type="protein sequence ID" value="ENSP00000381097.3"/>
    <property type="gene ID" value="ENSG00000154928.19"/>
</dbReference>
<dbReference type="Ensembl" id="ENST00000493838.1">
    <molecule id="P54762-5"/>
    <property type="protein sequence ID" value="ENSP00000419574.1"/>
    <property type="gene ID" value="ENSG00000154928.19"/>
</dbReference>
<dbReference type="GeneID" id="2047"/>
<dbReference type="KEGG" id="hsa:2047"/>
<dbReference type="MANE-Select" id="ENST00000398015.8">
    <property type="protein sequence ID" value="ENSP00000381097.3"/>
    <property type="RefSeq nucleotide sequence ID" value="NM_004441.5"/>
    <property type="RefSeq protein sequence ID" value="NP_004432.1"/>
</dbReference>
<dbReference type="UCSC" id="uc003eqt.4">
    <molecule id="P54762-1"/>
    <property type="organism name" value="human"/>
</dbReference>
<dbReference type="AGR" id="HGNC:3392"/>
<dbReference type="CTD" id="2047"/>
<dbReference type="DisGeNET" id="2047"/>
<dbReference type="GeneCards" id="EPHB1"/>
<dbReference type="HGNC" id="HGNC:3392">
    <property type="gene designation" value="EPHB1"/>
</dbReference>
<dbReference type="HPA" id="ENSG00000154928">
    <property type="expression patterns" value="Tissue enhanced (brain)"/>
</dbReference>
<dbReference type="MalaCards" id="EPHB1"/>
<dbReference type="MIM" id="600600">
    <property type="type" value="gene"/>
</dbReference>
<dbReference type="neXtProt" id="NX_P54762"/>
<dbReference type="OpenTargets" id="ENSG00000154928"/>
<dbReference type="PharmGKB" id="PA27824"/>
<dbReference type="VEuPathDB" id="HostDB:ENSG00000154928"/>
<dbReference type="eggNOG" id="KOG0196">
    <property type="taxonomic scope" value="Eukaryota"/>
</dbReference>
<dbReference type="GeneTree" id="ENSGT00940000155297"/>
<dbReference type="HOGENOM" id="CLU_000288_141_0_1"/>
<dbReference type="InParanoid" id="P54762"/>
<dbReference type="OMA" id="AVAAMEX"/>
<dbReference type="OrthoDB" id="4062651at2759"/>
<dbReference type="PAN-GO" id="P54762">
    <property type="GO annotations" value="8 GO annotations based on evolutionary models"/>
</dbReference>
<dbReference type="PhylomeDB" id="P54762"/>
<dbReference type="TreeFam" id="TF315608"/>
<dbReference type="BRENDA" id="2.7.10.1">
    <property type="organism ID" value="2681"/>
</dbReference>
<dbReference type="PathwayCommons" id="P54762"/>
<dbReference type="Reactome" id="R-HSA-2682334">
    <property type="pathway name" value="EPH-Ephrin signaling"/>
</dbReference>
<dbReference type="Reactome" id="R-HSA-3928662">
    <property type="pathway name" value="EPHB-mediated forward signaling"/>
</dbReference>
<dbReference type="Reactome" id="R-HSA-3928664">
    <property type="pathway name" value="Ephrin signaling"/>
</dbReference>
<dbReference type="Reactome" id="R-HSA-3928665">
    <property type="pathway name" value="EPH-ephrin mediated repulsion of cells"/>
</dbReference>
<dbReference type="SignaLink" id="P54762"/>
<dbReference type="SIGNOR" id="P54762"/>
<dbReference type="BioGRID-ORCS" id="2047">
    <property type="hits" value="6 hits in 1191 CRISPR screens"/>
</dbReference>
<dbReference type="ChiTaRS" id="EPHB1">
    <property type="organism name" value="human"/>
</dbReference>
<dbReference type="EvolutionaryTrace" id="P54762"/>
<dbReference type="GeneWiki" id="EPH_receptor_B1"/>
<dbReference type="GenomeRNAi" id="2047"/>
<dbReference type="Pharos" id="P54762">
    <property type="development level" value="Tchem"/>
</dbReference>
<dbReference type="PRO" id="PR:P54762"/>
<dbReference type="Proteomes" id="UP000005640">
    <property type="component" value="Chromosome 3"/>
</dbReference>
<dbReference type="RNAct" id="P54762">
    <property type="molecule type" value="protein"/>
</dbReference>
<dbReference type="Bgee" id="ENSG00000154928">
    <property type="expression patterns" value="Expressed in cortical plate and 138 other cell types or tissues"/>
</dbReference>
<dbReference type="ExpressionAtlas" id="P54762">
    <property type="expression patterns" value="baseline and differential"/>
</dbReference>
<dbReference type="GO" id="GO:0030424">
    <property type="term" value="C:axon"/>
    <property type="evidence" value="ECO:0007669"/>
    <property type="project" value="Ensembl"/>
</dbReference>
<dbReference type="GO" id="GO:0005829">
    <property type="term" value="C:cytosol"/>
    <property type="evidence" value="ECO:0000314"/>
    <property type="project" value="HPA"/>
</dbReference>
<dbReference type="GO" id="GO:0030425">
    <property type="term" value="C:dendrite"/>
    <property type="evidence" value="ECO:0000318"/>
    <property type="project" value="GO_Central"/>
</dbReference>
<dbReference type="GO" id="GO:0031901">
    <property type="term" value="C:early endosome membrane"/>
    <property type="evidence" value="ECO:0000314"/>
    <property type="project" value="UniProtKB"/>
</dbReference>
<dbReference type="GO" id="GO:0005783">
    <property type="term" value="C:endoplasmic reticulum"/>
    <property type="evidence" value="ECO:0000314"/>
    <property type="project" value="HPA"/>
</dbReference>
<dbReference type="GO" id="GO:0070062">
    <property type="term" value="C:extracellular exosome"/>
    <property type="evidence" value="ECO:0007005"/>
    <property type="project" value="UniProtKB"/>
</dbReference>
<dbReference type="GO" id="GO:0005576">
    <property type="term" value="C:extracellular region"/>
    <property type="evidence" value="ECO:0000304"/>
    <property type="project" value="Reactome"/>
</dbReference>
<dbReference type="GO" id="GO:0032433">
    <property type="term" value="C:filopodium tip"/>
    <property type="evidence" value="ECO:0007669"/>
    <property type="project" value="Ensembl"/>
</dbReference>
<dbReference type="GO" id="GO:0098978">
    <property type="term" value="C:glutamatergic synapse"/>
    <property type="evidence" value="ECO:0007669"/>
    <property type="project" value="Ensembl"/>
</dbReference>
<dbReference type="GO" id="GO:0045121">
    <property type="term" value="C:membrane raft"/>
    <property type="evidence" value="ECO:0007669"/>
    <property type="project" value="Ensembl"/>
</dbReference>
<dbReference type="GO" id="GO:0005886">
    <property type="term" value="C:plasma membrane"/>
    <property type="evidence" value="ECO:0000314"/>
    <property type="project" value="HPA"/>
</dbReference>
<dbReference type="GO" id="GO:0005524">
    <property type="term" value="F:ATP binding"/>
    <property type="evidence" value="ECO:0007669"/>
    <property type="project" value="UniProtKB-KW"/>
</dbReference>
<dbReference type="GO" id="GO:0008046">
    <property type="term" value="F:axon guidance receptor activity"/>
    <property type="evidence" value="ECO:0007669"/>
    <property type="project" value="Ensembl"/>
</dbReference>
<dbReference type="GO" id="GO:0044877">
    <property type="term" value="F:protein-containing complex binding"/>
    <property type="evidence" value="ECO:0007669"/>
    <property type="project" value="Ensembl"/>
</dbReference>
<dbReference type="GO" id="GO:0005005">
    <property type="term" value="F:transmembrane-ephrin receptor activity"/>
    <property type="evidence" value="ECO:0000314"/>
    <property type="project" value="UniProtKB"/>
</dbReference>
<dbReference type="GO" id="GO:0001525">
    <property type="term" value="P:angiogenesis"/>
    <property type="evidence" value="ECO:0000314"/>
    <property type="project" value="UniProtKB"/>
</dbReference>
<dbReference type="GO" id="GO:0007411">
    <property type="term" value="P:axon guidance"/>
    <property type="evidence" value="ECO:0000250"/>
    <property type="project" value="UniProtKB"/>
</dbReference>
<dbReference type="GO" id="GO:0048593">
    <property type="term" value="P:camera-type eye morphogenesis"/>
    <property type="evidence" value="ECO:0007669"/>
    <property type="project" value="Ensembl"/>
</dbReference>
<dbReference type="GO" id="GO:0060326">
    <property type="term" value="P:cell chemotaxis"/>
    <property type="evidence" value="ECO:0000314"/>
    <property type="project" value="UniProtKB"/>
</dbReference>
<dbReference type="GO" id="GO:0031589">
    <property type="term" value="P:cell-substrate adhesion"/>
    <property type="evidence" value="ECO:0000314"/>
    <property type="project" value="UniProtKB"/>
</dbReference>
<dbReference type="GO" id="GO:0021952">
    <property type="term" value="P:central nervous system projection neuron axonogenesis"/>
    <property type="evidence" value="ECO:0000250"/>
    <property type="project" value="UniProtKB"/>
</dbReference>
<dbReference type="GO" id="GO:0060996">
    <property type="term" value="P:dendritic spine development"/>
    <property type="evidence" value="ECO:0000250"/>
    <property type="project" value="UniProtKB"/>
</dbReference>
<dbReference type="GO" id="GO:0060997">
    <property type="term" value="P:dendritic spine morphogenesis"/>
    <property type="evidence" value="ECO:0000250"/>
    <property type="project" value="UniProtKB"/>
</dbReference>
<dbReference type="GO" id="GO:0050965">
    <property type="term" value="P:detection of temperature stimulus involved in sensory perception of pain"/>
    <property type="evidence" value="ECO:0000250"/>
    <property type="project" value="UniProtKB"/>
</dbReference>
<dbReference type="GO" id="GO:0048013">
    <property type="term" value="P:ephrin receptor signaling pathway"/>
    <property type="evidence" value="ECO:0000314"/>
    <property type="project" value="UniProtKB"/>
</dbReference>
<dbReference type="GO" id="GO:0030010">
    <property type="term" value="P:establishment of cell polarity"/>
    <property type="evidence" value="ECO:0000250"/>
    <property type="project" value="UniProtKB"/>
</dbReference>
<dbReference type="GO" id="GO:0021934">
    <property type="term" value="P:hindbrain tangential cell migration"/>
    <property type="evidence" value="ECO:0007669"/>
    <property type="project" value="Ensembl"/>
</dbReference>
<dbReference type="GO" id="GO:0001771">
    <property type="term" value="P:immunological synapse formation"/>
    <property type="evidence" value="ECO:0007669"/>
    <property type="project" value="Ensembl"/>
</dbReference>
<dbReference type="GO" id="GO:0050804">
    <property type="term" value="P:modulation of chemical synaptic transmission"/>
    <property type="evidence" value="ECO:0007669"/>
    <property type="project" value="Ensembl"/>
</dbReference>
<dbReference type="GO" id="GO:1902725">
    <property type="term" value="P:negative regulation of satellite cell differentiation"/>
    <property type="evidence" value="ECO:0000250"/>
    <property type="project" value="UniProtKB"/>
</dbReference>
<dbReference type="GO" id="GO:1902723">
    <property type="term" value="P:negative regulation of skeletal muscle satellite cell proliferation"/>
    <property type="evidence" value="ECO:0000250"/>
    <property type="project" value="UniProtKB"/>
</dbReference>
<dbReference type="GO" id="GO:0061351">
    <property type="term" value="P:neural precursor cell proliferation"/>
    <property type="evidence" value="ECO:0000250"/>
    <property type="project" value="UniProtKB"/>
</dbReference>
<dbReference type="GO" id="GO:0022008">
    <property type="term" value="P:neurogenesis"/>
    <property type="evidence" value="ECO:0000250"/>
    <property type="project" value="UniProtKB"/>
</dbReference>
<dbReference type="GO" id="GO:0021631">
    <property type="term" value="P:optic nerve morphogenesis"/>
    <property type="evidence" value="ECO:0007669"/>
    <property type="project" value="Ensembl"/>
</dbReference>
<dbReference type="GO" id="GO:0051965">
    <property type="term" value="P:positive regulation of synapse assembly"/>
    <property type="evidence" value="ECO:0000250"/>
    <property type="project" value="UniProtKB"/>
</dbReference>
<dbReference type="GO" id="GO:0046777">
    <property type="term" value="P:protein autophosphorylation"/>
    <property type="evidence" value="ECO:0000314"/>
    <property type="project" value="UniProtKB"/>
</dbReference>
<dbReference type="GO" id="GO:0070372">
    <property type="term" value="P:regulation of ERK1 and ERK2 cascade"/>
    <property type="evidence" value="ECO:0000314"/>
    <property type="project" value="UniProtKB"/>
</dbReference>
<dbReference type="GO" id="GO:0046328">
    <property type="term" value="P:regulation of JNK cascade"/>
    <property type="evidence" value="ECO:0000314"/>
    <property type="project" value="UniProtKB"/>
</dbReference>
<dbReference type="GO" id="GO:0031290">
    <property type="term" value="P:retinal ganglion cell axon guidance"/>
    <property type="evidence" value="ECO:0000250"/>
    <property type="project" value="UniProtKB"/>
</dbReference>
<dbReference type="GO" id="GO:0014719">
    <property type="term" value="P:skeletal muscle satellite cell activation"/>
    <property type="evidence" value="ECO:0000250"/>
    <property type="project" value="UniProtKB"/>
</dbReference>
<dbReference type="CDD" id="cd10476">
    <property type="entry name" value="EphR_LBD_B1"/>
    <property type="match status" value="1"/>
</dbReference>
<dbReference type="CDD" id="cd00063">
    <property type="entry name" value="FN3"/>
    <property type="match status" value="2"/>
</dbReference>
<dbReference type="CDD" id="cd05065">
    <property type="entry name" value="PTKc_EphR_B"/>
    <property type="match status" value="1"/>
</dbReference>
<dbReference type="CDD" id="cd09551">
    <property type="entry name" value="SAM_EPH-B1"/>
    <property type="match status" value="1"/>
</dbReference>
<dbReference type="FunFam" id="2.60.40.10:FF:000041">
    <property type="entry name" value="ephrin type-A receptor 3"/>
    <property type="match status" value="1"/>
</dbReference>
<dbReference type="FunFam" id="1.10.150.50:FF:000001">
    <property type="entry name" value="Ephrin type-A receptor 5"/>
    <property type="match status" value="1"/>
</dbReference>
<dbReference type="FunFam" id="2.10.50.10:FF:000001">
    <property type="entry name" value="Ephrin type-A receptor 5"/>
    <property type="match status" value="1"/>
</dbReference>
<dbReference type="FunFam" id="2.60.40.1770:FF:000001">
    <property type="entry name" value="Ephrin type-A receptor 5"/>
    <property type="match status" value="1"/>
</dbReference>
<dbReference type="FunFam" id="3.30.200.20:FF:000001">
    <property type="entry name" value="Ephrin type-A receptor 5"/>
    <property type="match status" value="1"/>
</dbReference>
<dbReference type="FunFam" id="1.10.510.10:FF:000015">
    <property type="entry name" value="Ephrin type-B receptor 2"/>
    <property type="match status" value="1"/>
</dbReference>
<dbReference type="FunFam" id="2.60.120.260:FF:000004">
    <property type="entry name" value="Ephrin type-B receptor 2"/>
    <property type="match status" value="1"/>
</dbReference>
<dbReference type="FunFam" id="2.60.40.10:FF:000110">
    <property type="entry name" value="Ephrin type-B receptor 2"/>
    <property type="match status" value="1"/>
</dbReference>
<dbReference type="Gene3D" id="2.60.40.1770">
    <property type="entry name" value="ephrin a2 ectodomain"/>
    <property type="match status" value="1"/>
</dbReference>
<dbReference type="Gene3D" id="2.60.120.260">
    <property type="entry name" value="Galactose-binding domain-like"/>
    <property type="match status" value="1"/>
</dbReference>
<dbReference type="Gene3D" id="2.60.40.10">
    <property type="entry name" value="Immunoglobulins"/>
    <property type="match status" value="2"/>
</dbReference>
<dbReference type="Gene3D" id="3.30.200.20">
    <property type="entry name" value="Phosphorylase Kinase, domain 1"/>
    <property type="match status" value="1"/>
</dbReference>
<dbReference type="Gene3D" id="1.10.150.50">
    <property type="entry name" value="Transcription Factor, Ets-1"/>
    <property type="match status" value="1"/>
</dbReference>
<dbReference type="Gene3D" id="1.10.510.10">
    <property type="entry name" value="Transferase(Phosphotransferase) domain 1"/>
    <property type="match status" value="1"/>
</dbReference>
<dbReference type="Gene3D" id="2.10.50.10">
    <property type="entry name" value="Tumor Necrosis Factor Receptor, subunit A, domain 2"/>
    <property type="match status" value="1"/>
</dbReference>
<dbReference type="InterPro" id="IPR027936">
    <property type="entry name" value="Eph_TM"/>
</dbReference>
<dbReference type="InterPro" id="IPR034231">
    <property type="entry name" value="EphB1_rcpt_lig-bd"/>
</dbReference>
<dbReference type="InterPro" id="IPR042819">
    <property type="entry name" value="EphB1_SAM"/>
</dbReference>
<dbReference type="InterPro" id="IPR001090">
    <property type="entry name" value="Ephrin_rcpt_lig-bd_dom"/>
</dbReference>
<dbReference type="InterPro" id="IPR050449">
    <property type="entry name" value="Ephrin_rcpt_TKs"/>
</dbReference>
<dbReference type="InterPro" id="IPR003961">
    <property type="entry name" value="FN3_dom"/>
</dbReference>
<dbReference type="InterPro" id="IPR036116">
    <property type="entry name" value="FN3_sf"/>
</dbReference>
<dbReference type="InterPro" id="IPR008979">
    <property type="entry name" value="Galactose-bd-like_sf"/>
</dbReference>
<dbReference type="InterPro" id="IPR009030">
    <property type="entry name" value="Growth_fac_rcpt_cys_sf"/>
</dbReference>
<dbReference type="InterPro" id="IPR013783">
    <property type="entry name" value="Ig-like_fold"/>
</dbReference>
<dbReference type="InterPro" id="IPR011009">
    <property type="entry name" value="Kinase-like_dom_sf"/>
</dbReference>
<dbReference type="InterPro" id="IPR000719">
    <property type="entry name" value="Prot_kinase_dom"/>
</dbReference>
<dbReference type="InterPro" id="IPR017441">
    <property type="entry name" value="Protein_kinase_ATP_BS"/>
</dbReference>
<dbReference type="InterPro" id="IPR001660">
    <property type="entry name" value="SAM"/>
</dbReference>
<dbReference type="InterPro" id="IPR013761">
    <property type="entry name" value="SAM/pointed_sf"/>
</dbReference>
<dbReference type="InterPro" id="IPR001245">
    <property type="entry name" value="Ser-Thr/Tyr_kinase_cat_dom"/>
</dbReference>
<dbReference type="InterPro" id="IPR008266">
    <property type="entry name" value="Tyr_kinase_AS"/>
</dbReference>
<dbReference type="InterPro" id="IPR020635">
    <property type="entry name" value="Tyr_kinase_cat_dom"/>
</dbReference>
<dbReference type="InterPro" id="IPR016257">
    <property type="entry name" value="Tyr_kinase_ephrin_rcpt"/>
</dbReference>
<dbReference type="InterPro" id="IPR001426">
    <property type="entry name" value="Tyr_kinase_rcpt_V_CS"/>
</dbReference>
<dbReference type="PANTHER" id="PTHR46877">
    <property type="entry name" value="EPH RECEPTOR A5"/>
    <property type="match status" value="1"/>
</dbReference>
<dbReference type="PANTHER" id="PTHR46877:SF17">
    <property type="entry name" value="EPHRIN TYPE-B RECEPTOR 1"/>
    <property type="match status" value="1"/>
</dbReference>
<dbReference type="Pfam" id="PF14575">
    <property type="entry name" value="EphA2_TM"/>
    <property type="match status" value="1"/>
</dbReference>
<dbReference type="Pfam" id="PF01404">
    <property type="entry name" value="Ephrin_lbd"/>
    <property type="match status" value="1"/>
</dbReference>
<dbReference type="Pfam" id="PF00041">
    <property type="entry name" value="fn3"/>
    <property type="match status" value="2"/>
</dbReference>
<dbReference type="Pfam" id="PF07714">
    <property type="entry name" value="PK_Tyr_Ser-Thr"/>
    <property type="match status" value="1"/>
</dbReference>
<dbReference type="Pfam" id="PF00536">
    <property type="entry name" value="SAM_1"/>
    <property type="match status" value="1"/>
</dbReference>
<dbReference type="PIRSF" id="PIRSF000666">
    <property type="entry name" value="TyrPK_ephrin_receptor"/>
    <property type="match status" value="1"/>
</dbReference>
<dbReference type="PRINTS" id="PR00014">
    <property type="entry name" value="FNTYPEIII"/>
</dbReference>
<dbReference type="PRINTS" id="PR00109">
    <property type="entry name" value="TYRKINASE"/>
</dbReference>
<dbReference type="SMART" id="SM00615">
    <property type="entry name" value="EPH_lbd"/>
    <property type="match status" value="1"/>
</dbReference>
<dbReference type="SMART" id="SM01411">
    <property type="entry name" value="Ephrin_rec_like"/>
    <property type="match status" value="1"/>
</dbReference>
<dbReference type="SMART" id="SM00060">
    <property type="entry name" value="FN3"/>
    <property type="match status" value="2"/>
</dbReference>
<dbReference type="SMART" id="SM00454">
    <property type="entry name" value="SAM"/>
    <property type="match status" value="1"/>
</dbReference>
<dbReference type="SMART" id="SM00219">
    <property type="entry name" value="TyrKc"/>
    <property type="match status" value="1"/>
</dbReference>
<dbReference type="SUPFAM" id="SSF49265">
    <property type="entry name" value="Fibronectin type III"/>
    <property type="match status" value="1"/>
</dbReference>
<dbReference type="SUPFAM" id="SSF49785">
    <property type="entry name" value="Galactose-binding domain-like"/>
    <property type="match status" value="1"/>
</dbReference>
<dbReference type="SUPFAM" id="SSF57184">
    <property type="entry name" value="Growth factor receptor domain"/>
    <property type="match status" value="1"/>
</dbReference>
<dbReference type="SUPFAM" id="SSF56112">
    <property type="entry name" value="Protein kinase-like (PK-like)"/>
    <property type="match status" value="1"/>
</dbReference>
<dbReference type="SUPFAM" id="SSF47769">
    <property type="entry name" value="SAM/Pointed domain"/>
    <property type="match status" value="1"/>
</dbReference>
<dbReference type="PROSITE" id="PS01186">
    <property type="entry name" value="EGF_2"/>
    <property type="match status" value="1"/>
</dbReference>
<dbReference type="PROSITE" id="PS51550">
    <property type="entry name" value="EPH_LBD"/>
    <property type="match status" value="1"/>
</dbReference>
<dbReference type="PROSITE" id="PS50853">
    <property type="entry name" value="FN3"/>
    <property type="match status" value="2"/>
</dbReference>
<dbReference type="PROSITE" id="PS00107">
    <property type="entry name" value="PROTEIN_KINASE_ATP"/>
    <property type="match status" value="1"/>
</dbReference>
<dbReference type="PROSITE" id="PS50011">
    <property type="entry name" value="PROTEIN_KINASE_DOM"/>
    <property type="match status" value="1"/>
</dbReference>
<dbReference type="PROSITE" id="PS00109">
    <property type="entry name" value="PROTEIN_KINASE_TYR"/>
    <property type="match status" value="1"/>
</dbReference>
<dbReference type="PROSITE" id="PS00790">
    <property type="entry name" value="RECEPTOR_TYR_KIN_V_1"/>
    <property type="match status" value="1"/>
</dbReference>
<dbReference type="PROSITE" id="PS00791">
    <property type="entry name" value="RECEPTOR_TYR_KIN_V_2"/>
    <property type="match status" value="1"/>
</dbReference>
<dbReference type="PROSITE" id="PS50105">
    <property type="entry name" value="SAM_DOMAIN"/>
    <property type="match status" value="1"/>
</dbReference>
<feature type="signal peptide" evidence="13">
    <location>
        <begin position="1"/>
        <end position="17"/>
    </location>
</feature>
<feature type="chain" id="PRO_0000016824" description="Ephrin type-B receptor 1">
    <location>
        <begin position="18"/>
        <end position="984"/>
    </location>
</feature>
<feature type="topological domain" description="Extracellular" evidence="4">
    <location>
        <begin position="18"/>
        <end position="540"/>
    </location>
</feature>
<feature type="transmembrane region" description="Helical" evidence="4">
    <location>
        <begin position="541"/>
        <end position="563"/>
    </location>
</feature>
<feature type="topological domain" description="Cytoplasmic" evidence="4">
    <location>
        <begin position="564"/>
        <end position="984"/>
    </location>
</feature>
<feature type="domain" description="Eph LBD" evidence="8">
    <location>
        <begin position="19"/>
        <end position="201"/>
    </location>
</feature>
<feature type="domain" description="Fibronectin type-III 1" evidence="7">
    <location>
        <begin position="322"/>
        <end position="432"/>
    </location>
</feature>
<feature type="domain" description="Fibronectin type-III 2" evidence="7">
    <location>
        <begin position="433"/>
        <end position="528"/>
    </location>
</feature>
<feature type="domain" description="Protein kinase" evidence="5">
    <location>
        <begin position="619"/>
        <end position="882"/>
    </location>
</feature>
<feature type="domain" description="SAM" evidence="6">
    <location>
        <begin position="911"/>
        <end position="975"/>
    </location>
</feature>
<feature type="short sequence motif" description="PDZ-binding" evidence="4">
    <location>
        <begin position="982"/>
        <end position="984"/>
    </location>
</feature>
<feature type="active site" description="Proton acceptor" evidence="5 9">
    <location>
        <position position="744"/>
    </location>
</feature>
<feature type="binding site" evidence="5">
    <location>
        <begin position="625"/>
        <end position="633"/>
    </location>
    <ligand>
        <name>ATP</name>
        <dbReference type="ChEBI" id="CHEBI:30616"/>
    </ligand>
</feature>
<feature type="binding site" evidence="21">
    <location>
        <position position="651"/>
    </location>
    <ligand>
        <name>ATP</name>
        <dbReference type="ChEBI" id="CHEBI:30616"/>
    </ligand>
</feature>
<feature type="modified residue" description="Phosphotyrosine" evidence="2">
    <location>
        <position position="600"/>
    </location>
</feature>
<feature type="modified residue" description="Phosphotyrosine; by autocatalysis" evidence="1">
    <location>
        <position position="928"/>
    </location>
</feature>
<feature type="glycosylation site" description="N-linked (GlcNAc...) asparagine" evidence="4">
    <location>
        <position position="334"/>
    </location>
</feature>
<feature type="glycosylation site" description="N-linked (GlcNAc...) asparagine" evidence="4">
    <location>
        <position position="426"/>
    </location>
</feature>
<feature type="glycosylation site" description="N-linked (GlcNAc...) asparagine" evidence="4">
    <location>
        <position position="480"/>
    </location>
</feature>
<feature type="splice variant" id="VSP_056017" description="In isoform 2." evidence="19">
    <location>
        <begin position="1"/>
        <end position="439"/>
    </location>
</feature>
<feature type="splice variant" id="VSP_056018" description="In isoform 3." evidence="20">
    <original>VNTEVRSFGPLTRNGFYLAFQDYGACMSLLSVRVFFKKCPSIVQNFAVFPETMTGAESTSLVIARGTCIPNAEEVDVPIKLYCNG</original>
    <variation>LALQGHSRPARKLKAAPTAPPTAAPLQRRLPSAPVGPVITERTLTLQKWHALASHQVPAMLSPSSMRRPSFWSGTLQGRQVGGMM</variation>
    <location>
        <begin position="158"/>
        <end position="242"/>
    </location>
</feature>
<feature type="splice variant" id="VSP_056019" description="In isoform 3." evidence="20">
    <location>
        <begin position="243"/>
        <end position="984"/>
    </location>
</feature>
<feature type="sequence variant" id="VAR_042165" description="In dbSNP:rs55650774." evidence="14">
    <original>M</original>
    <variation>V</variation>
    <location>
        <position position="18"/>
    </location>
</feature>
<feature type="sequence variant" id="VAR_011801" description="In dbSNP:rs1042794.">
    <original>T</original>
    <variation>S</variation>
    <location>
        <position position="87"/>
    </location>
</feature>
<feature type="sequence variant" id="VAR_011802" description="In dbSNP:rs1042793.">
    <original>G</original>
    <variation>R</variation>
    <location>
        <position position="152"/>
    </location>
</feature>
<feature type="sequence variant" id="VAR_011803" description="In dbSNP:rs1042789.">
    <original>R</original>
    <variation>G</variation>
    <location>
        <position position="367"/>
    </location>
</feature>
<feature type="sequence variant" id="VAR_042166" description="In dbSNP:rs56396912." evidence="14">
    <original>T</original>
    <variation>M</variation>
    <location>
        <position position="387"/>
    </location>
</feature>
<feature type="sequence variant" id="VAR_011804" description="In dbSNP:rs1042788.">
    <original>R</original>
    <variation>S</variation>
    <location>
        <position position="485"/>
    </location>
</feature>
<feature type="sequence variant" id="VAR_042167" description="In an ovarian undifferentiated carcinoma sample; somatic mutation." evidence="14">
    <original>S</original>
    <variation>T</variation>
    <location>
        <position position="707"/>
    </location>
</feature>
<feature type="sequence variant" id="VAR_042168" description="In a gastric adenocarcinoma sample; somatic mutation." evidence="14">
    <original>I</original>
    <variation>V</variation>
    <location>
        <position position="719"/>
    </location>
</feature>
<feature type="sequence variant" id="VAR_042169" description="In a gastric adenocarcinoma sample; somatic mutation; dbSNP:rs1338928289." evidence="14">
    <original>R</original>
    <variation>Q</variation>
    <location>
        <position position="743"/>
    </location>
</feature>
<feature type="sequence variant" id="VAR_011805" description="In dbSNP:rs1042785.">
    <original>M</original>
    <variation>T</variation>
    <location>
        <position position="847"/>
    </location>
</feature>
<feature type="sequence variant" id="VAR_042170" description="In dbSNP:rs56345346." evidence="14">
    <original>A</original>
    <variation>T</variation>
    <location>
        <position position="912"/>
    </location>
</feature>
<feature type="sequence variant" id="VAR_058479" description="In dbSNP:rs1042784." evidence="17">
    <original>R</original>
    <variation>W</variation>
    <location>
        <position position="973"/>
    </location>
</feature>
<feature type="sequence variant" id="VAR_042171" description="In dbSNP:rs56186270." evidence="14">
    <original>T</original>
    <variation>M</variation>
    <location>
        <position position="981"/>
    </location>
</feature>
<feature type="mutagenesis site" description="Loss of interaction with NCK1." evidence="17">
    <original>Y</original>
    <variation>F</variation>
    <location>
        <position position="594"/>
    </location>
</feature>
<feature type="mutagenesis site" description="Loss of interaction with SHC1 and SRC." evidence="12">
    <original>Y</original>
    <variation>F</variation>
    <location>
        <position position="600"/>
    </location>
</feature>
<feature type="mutagenesis site" description="Kinase-dead mutant. Unable to autophosphorylate, to interact with SH2 domain-containing interactors, to activate the MAPK/ERK and JUN signaling cascades. Not ubiquitinated by CBL." evidence="15 17">
    <original>K</original>
    <variation>R</variation>
    <location>
        <position position="651"/>
    </location>
</feature>
<feature type="mutagenesis site" description="Loss of interaction with SHC1." evidence="12">
    <original>Y</original>
    <variation>F</variation>
    <location>
        <position position="778"/>
    </location>
</feature>
<feature type="mutagenesis site" description="Disrupts binding with the GRB10 SH2 domain, providing evidence for phosphorylation. Disrupts interaction with GRB7 and ACP1." evidence="11 16 18">
    <original>Y</original>
    <variation>F</variation>
    <location>
        <position position="928"/>
    </location>
</feature>
<feature type="sequence conflict" description="In Ref. 2; AAD02030/AAB94627/AAB94628." evidence="21" ref="2">
    <original>A</original>
    <variation>E</variation>
    <location>
        <position position="12"/>
    </location>
</feature>
<feature type="sequence conflict" description="In Ref. 2; AAD02030/AAD02031/AAB94627/AAB94628." evidence="21" ref="2">
    <original>S</original>
    <variation>I</variation>
    <location>
        <position position="185"/>
    </location>
</feature>
<feature type="sequence conflict" description="In Ref. 2; AAD02030/AAD02031/AAB94627/AAB94628." evidence="21" ref="2">
    <original>T</original>
    <variation>R</variation>
    <location>
        <position position="274"/>
    </location>
</feature>
<feature type="sequence conflict" description="In Ref. 2; AAD02030/AAD02031/AAB94627/AAB94628." evidence="21" ref="2">
    <original>T</original>
    <variation>S</variation>
    <location>
        <position position="336"/>
    </location>
</feature>
<feature type="sequence conflict" description="In Ref. 6; AAI11745." evidence="21" ref="6">
    <original>V</original>
    <variation>L</variation>
    <location>
        <position position="752"/>
    </location>
</feature>
<feature type="sequence conflict" description="In Ref. 2; AAD02030/AAB94627." evidence="21" ref="2">
    <original>V</original>
    <variation>H</variation>
    <location>
        <position position="813"/>
    </location>
</feature>
<feature type="sequence conflict" description="In Ref. 2; AAD02030/AAB94627." evidence="21" ref="2">
    <original>S</original>
    <variation>Y</variation>
    <location>
        <position position="819"/>
    </location>
</feature>
<feature type="sequence conflict" description="In Ref. 4; BAF83897." evidence="21" ref="4">
    <original>M</original>
    <variation>I</variation>
    <location>
        <position position="881"/>
    </location>
</feature>
<feature type="sequence conflict" description="In Ref. 4; BAF83897." evidence="21" ref="4">
    <original>L</original>
    <variation>H</variation>
    <location>
        <position position="903"/>
    </location>
</feature>
<feature type="strand" evidence="22">
    <location>
        <begin position="441"/>
        <end position="445"/>
    </location>
</feature>
<feature type="strand" evidence="22">
    <location>
        <begin position="447"/>
        <end position="453"/>
    </location>
</feature>
<feature type="strand" evidence="22">
    <location>
        <begin position="464"/>
        <end position="473"/>
    </location>
</feature>
<feature type="strand" evidence="22">
    <location>
        <begin position="482"/>
        <end position="495"/>
    </location>
</feature>
<feature type="strand" evidence="22">
    <location>
        <begin position="501"/>
        <end position="512"/>
    </location>
</feature>
<feature type="strand" evidence="22">
    <location>
        <begin position="514"/>
        <end position="517"/>
    </location>
</feature>
<feature type="strand" evidence="22">
    <location>
        <begin position="521"/>
        <end position="524"/>
    </location>
</feature>
<feature type="helix" evidence="26">
    <location>
        <begin position="616"/>
        <end position="618"/>
    </location>
</feature>
<feature type="strand" evidence="26">
    <location>
        <begin position="619"/>
        <end position="627"/>
    </location>
</feature>
<feature type="strand" evidence="26">
    <location>
        <begin position="632"/>
        <end position="638"/>
    </location>
</feature>
<feature type="strand" evidence="26">
    <location>
        <begin position="646"/>
        <end position="652"/>
    </location>
</feature>
<feature type="helix" evidence="26">
    <location>
        <begin position="659"/>
        <end position="673"/>
    </location>
</feature>
<feature type="strand" evidence="26">
    <location>
        <begin position="683"/>
        <end position="687"/>
    </location>
</feature>
<feature type="strand" evidence="26">
    <location>
        <begin position="689"/>
        <end position="692"/>
    </location>
</feature>
<feature type="strand" evidence="26">
    <location>
        <begin position="694"/>
        <end position="698"/>
    </location>
</feature>
<feature type="helix" evidence="26">
    <location>
        <begin position="705"/>
        <end position="710"/>
    </location>
</feature>
<feature type="turn" evidence="26">
    <location>
        <begin position="711"/>
        <end position="714"/>
    </location>
</feature>
<feature type="helix" evidence="26">
    <location>
        <begin position="718"/>
        <end position="737"/>
    </location>
</feature>
<feature type="helix" evidence="26">
    <location>
        <begin position="747"/>
        <end position="749"/>
    </location>
</feature>
<feature type="strand" evidence="26">
    <location>
        <begin position="750"/>
        <end position="752"/>
    </location>
</feature>
<feature type="strand" evidence="26">
    <location>
        <begin position="758"/>
        <end position="760"/>
    </location>
</feature>
<feature type="strand" evidence="25">
    <location>
        <begin position="783"/>
        <end position="786"/>
    </location>
</feature>
<feature type="helix" evidence="26">
    <location>
        <begin position="788"/>
        <end position="790"/>
    </location>
</feature>
<feature type="helix" evidence="26">
    <location>
        <begin position="793"/>
        <end position="798"/>
    </location>
</feature>
<feature type="helix" evidence="26">
    <location>
        <begin position="803"/>
        <end position="818"/>
    </location>
</feature>
<feature type="turn" evidence="26">
    <location>
        <begin position="824"/>
        <end position="827"/>
    </location>
</feature>
<feature type="helix" evidence="26">
    <location>
        <begin position="830"/>
        <end position="838"/>
    </location>
</feature>
<feature type="helix" evidence="26">
    <location>
        <begin position="851"/>
        <end position="860"/>
    </location>
</feature>
<feature type="helix" evidence="26">
    <location>
        <begin position="865"/>
        <end position="867"/>
    </location>
</feature>
<feature type="helix" evidence="26">
    <location>
        <begin position="871"/>
        <end position="883"/>
    </location>
</feature>
<feature type="helix" evidence="26">
    <location>
        <begin position="885"/>
        <end position="887"/>
    </location>
</feature>
<feature type="strand" evidence="24">
    <location>
        <begin position="889"/>
        <end position="891"/>
    </location>
</feature>
<feature type="helix" evidence="23">
    <location>
        <begin position="916"/>
        <end position="921"/>
    </location>
</feature>
<feature type="turn" evidence="23">
    <location>
        <begin position="922"/>
        <end position="924"/>
    </location>
</feature>
<feature type="helix" evidence="23">
    <location>
        <begin position="926"/>
        <end position="928"/>
    </location>
</feature>
<feature type="helix" evidence="23">
    <location>
        <begin position="929"/>
        <end position="935"/>
    </location>
</feature>
<feature type="helix" evidence="23">
    <location>
        <begin position="940"/>
        <end position="943"/>
    </location>
</feature>
<feature type="helix" evidence="23">
    <location>
        <begin position="948"/>
        <end position="954"/>
    </location>
</feature>
<feature type="helix" evidence="23">
    <location>
        <begin position="959"/>
        <end position="975"/>
    </location>
</feature>
<organism>
    <name type="scientific">Homo sapiens</name>
    <name type="common">Human</name>
    <dbReference type="NCBI Taxonomy" id="9606"/>
    <lineage>
        <taxon>Eukaryota</taxon>
        <taxon>Metazoa</taxon>
        <taxon>Chordata</taxon>
        <taxon>Craniata</taxon>
        <taxon>Vertebrata</taxon>
        <taxon>Euteleostomi</taxon>
        <taxon>Mammalia</taxon>
        <taxon>Eutheria</taxon>
        <taxon>Euarchontoglires</taxon>
        <taxon>Primates</taxon>
        <taxon>Haplorrhini</taxon>
        <taxon>Catarrhini</taxon>
        <taxon>Hominidae</taxon>
        <taxon>Homo</taxon>
    </lineage>
</organism>
<name>EPHB1_HUMAN</name>
<reference key="1">
    <citation type="journal article" date="1995" name="Genomics">
        <title>cDNA cloning, molecular characterization, and chromosomal localization of NET(EPHT2), a human EPH-related receptor protein-tyrosine kinase gene preferentially expressed in brain.</title>
        <authorList>
            <person name="Tang X.X."/>
            <person name="Biegel J.A."/>
            <person name="Nycum L.M."/>
            <person name="Yoshioka A."/>
            <person name="Brodeur G.M."/>
            <person name="Pleasure D.E."/>
            <person name="Ikegaki N."/>
        </authorList>
    </citation>
    <scope>NUCLEOTIDE SEQUENCE [MRNA] (ISOFORM 1)</scope>
    <source>
        <tissue>Fetal brain</tissue>
    </source>
</reference>
<reference key="2">
    <citation type="journal article" date="1998" name="J. Biol. Chem.">
        <title>Nck recruitment to Eph receptor, EphB1/ELK, couples ligand activation to c-Jun kinase.</title>
        <authorList>
            <person name="Stein E."/>
            <person name="Huynh-Do U."/>
            <person name="Lane A.A."/>
            <person name="Cerretti D.P."/>
            <person name="Daniel T.O."/>
        </authorList>
    </citation>
    <scope>NUCLEOTIDE SEQUENCE [MRNA] (ISOFORM 1)</scope>
    <scope>FUNCTION IN CELL ADHESION</scope>
    <scope>FUNCTION IN JUN CASCADE ACTIVATION</scope>
    <scope>INTERACTION WITH NCK1</scope>
    <scope>MUTAGENESIS OF TYR-594 AND LYS-651</scope>
    <scope>VARIANT TRP-973</scope>
    <source>
        <tissue>Kidney</tissue>
    </source>
</reference>
<reference key="3">
    <citation type="journal article" date="2008" name="Arthritis Res. Ther.">
        <title>Novel splice variants derived from the receptor tyrosine kinase superfamily are potential therapeutics for rheumatoid arthritis.</title>
        <authorList>
            <person name="Jin P."/>
            <person name="Zhang J."/>
            <person name="Sumariwalla P.F."/>
            <person name="Ni I."/>
            <person name="Jorgensen B."/>
            <person name="Crawford D."/>
            <person name="Phillips S."/>
            <person name="Feldmann M."/>
            <person name="Shepard H.M."/>
            <person name="Paleolog E.M."/>
        </authorList>
    </citation>
    <scope>NUCLEOTIDE SEQUENCE [MRNA] (ISOFORM 3)</scope>
    <scope>ALTERNATIVE SPLICING</scope>
</reference>
<reference key="4">
    <citation type="journal article" date="2004" name="Nat. Genet.">
        <title>Complete sequencing and characterization of 21,243 full-length human cDNAs.</title>
        <authorList>
            <person name="Ota T."/>
            <person name="Suzuki Y."/>
            <person name="Nishikawa T."/>
            <person name="Otsuki T."/>
            <person name="Sugiyama T."/>
            <person name="Irie R."/>
            <person name="Wakamatsu A."/>
            <person name="Hayashi K."/>
            <person name="Sato H."/>
            <person name="Nagai K."/>
            <person name="Kimura K."/>
            <person name="Makita H."/>
            <person name="Sekine M."/>
            <person name="Obayashi M."/>
            <person name="Nishi T."/>
            <person name="Shibahara T."/>
            <person name="Tanaka T."/>
            <person name="Ishii S."/>
            <person name="Yamamoto J."/>
            <person name="Saito K."/>
            <person name="Kawai Y."/>
            <person name="Isono Y."/>
            <person name="Nakamura Y."/>
            <person name="Nagahari K."/>
            <person name="Murakami K."/>
            <person name="Yasuda T."/>
            <person name="Iwayanagi T."/>
            <person name="Wagatsuma M."/>
            <person name="Shiratori A."/>
            <person name="Sudo H."/>
            <person name="Hosoiri T."/>
            <person name="Kaku Y."/>
            <person name="Kodaira H."/>
            <person name="Kondo H."/>
            <person name="Sugawara M."/>
            <person name="Takahashi M."/>
            <person name="Kanda K."/>
            <person name="Yokoi T."/>
            <person name="Furuya T."/>
            <person name="Kikkawa E."/>
            <person name="Omura Y."/>
            <person name="Abe K."/>
            <person name="Kamihara K."/>
            <person name="Katsuta N."/>
            <person name="Sato K."/>
            <person name="Tanikawa M."/>
            <person name="Yamazaki M."/>
            <person name="Ninomiya K."/>
            <person name="Ishibashi T."/>
            <person name="Yamashita H."/>
            <person name="Murakawa K."/>
            <person name="Fujimori K."/>
            <person name="Tanai H."/>
            <person name="Kimata M."/>
            <person name="Watanabe M."/>
            <person name="Hiraoka S."/>
            <person name="Chiba Y."/>
            <person name="Ishida S."/>
            <person name="Ono Y."/>
            <person name="Takiguchi S."/>
            <person name="Watanabe S."/>
            <person name="Yosida M."/>
            <person name="Hotuta T."/>
            <person name="Kusano J."/>
            <person name="Kanehori K."/>
            <person name="Takahashi-Fujii A."/>
            <person name="Hara H."/>
            <person name="Tanase T.-O."/>
            <person name="Nomura Y."/>
            <person name="Togiya S."/>
            <person name="Komai F."/>
            <person name="Hara R."/>
            <person name="Takeuchi K."/>
            <person name="Arita M."/>
            <person name="Imose N."/>
            <person name="Musashino K."/>
            <person name="Yuuki H."/>
            <person name="Oshima A."/>
            <person name="Sasaki N."/>
            <person name="Aotsuka S."/>
            <person name="Yoshikawa Y."/>
            <person name="Matsunawa H."/>
            <person name="Ichihara T."/>
            <person name="Shiohata N."/>
            <person name="Sano S."/>
            <person name="Moriya S."/>
            <person name="Momiyama H."/>
            <person name="Satoh N."/>
            <person name="Takami S."/>
            <person name="Terashima Y."/>
            <person name="Suzuki O."/>
            <person name="Nakagawa S."/>
            <person name="Senoh A."/>
            <person name="Mizoguchi H."/>
            <person name="Goto Y."/>
            <person name="Shimizu F."/>
            <person name="Wakebe H."/>
            <person name="Hishigaki H."/>
            <person name="Watanabe T."/>
            <person name="Sugiyama A."/>
            <person name="Takemoto M."/>
            <person name="Kawakami B."/>
            <person name="Yamazaki M."/>
            <person name="Watanabe K."/>
            <person name="Kumagai A."/>
            <person name="Itakura S."/>
            <person name="Fukuzumi Y."/>
            <person name="Fujimori Y."/>
            <person name="Komiyama M."/>
            <person name="Tashiro H."/>
            <person name="Tanigami A."/>
            <person name="Fujiwara T."/>
            <person name="Ono T."/>
            <person name="Yamada K."/>
            <person name="Fujii Y."/>
            <person name="Ozaki K."/>
            <person name="Hirao M."/>
            <person name="Ohmori Y."/>
            <person name="Kawabata A."/>
            <person name="Hikiji T."/>
            <person name="Kobatake N."/>
            <person name="Inagaki H."/>
            <person name="Ikema Y."/>
            <person name="Okamoto S."/>
            <person name="Okitani R."/>
            <person name="Kawakami T."/>
            <person name="Noguchi S."/>
            <person name="Itoh T."/>
            <person name="Shigeta K."/>
            <person name="Senba T."/>
            <person name="Matsumura K."/>
            <person name="Nakajima Y."/>
            <person name="Mizuno T."/>
            <person name="Morinaga M."/>
            <person name="Sasaki M."/>
            <person name="Togashi T."/>
            <person name="Oyama M."/>
            <person name="Hata H."/>
            <person name="Watanabe M."/>
            <person name="Komatsu T."/>
            <person name="Mizushima-Sugano J."/>
            <person name="Satoh T."/>
            <person name="Shirai Y."/>
            <person name="Takahashi Y."/>
            <person name="Nakagawa K."/>
            <person name="Okumura K."/>
            <person name="Nagase T."/>
            <person name="Nomura N."/>
            <person name="Kikuchi H."/>
            <person name="Masuho Y."/>
            <person name="Yamashita R."/>
            <person name="Nakai K."/>
            <person name="Yada T."/>
            <person name="Nakamura Y."/>
            <person name="Ohara O."/>
            <person name="Isogai T."/>
            <person name="Sugano S."/>
        </authorList>
    </citation>
    <scope>NUCLEOTIDE SEQUENCE [LARGE SCALE MRNA] (ISOFORMS 1 AND 2)</scope>
    <source>
        <tissue>Tongue</tissue>
    </source>
</reference>
<reference key="5">
    <citation type="journal article" date="2006" name="Nature">
        <title>The DNA sequence, annotation and analysis of human chromosome 3.</title>
        <authorList>
            <person name="Muzny D.M."/>
            <person name="Scherer S.E."/>
            <person name="Kaul R."/>
            <person name="Wang J."/>
            <person name="Yu J."/>
            <person name="Sudbrak R."/>
            <person name="Buhay C.J."/>
            <person name="Chen R."/>
            <person name="Cree A."/>
            <person name="Ding Y."/>
            <person name="Dugan-Rocha S."/>
            <person name="Gill R."/>
            <person name="Gunaratne P."/>
            <person name="Harris R.A."/>
            <person name="Hawes A.C."/>
            <person name="Hernandez J."/>
            <person name="Hodgson A.V."/>
            <person name="Hume J."/>
            <person name="Jackson A."/>
            <person name="Khan Z.M."/>
            <person name="Kovar-Smith C."/>
            <person name="Lewis L.R."/>
            <person name="Lozado R.J."/>
            <person name="Metzker M.L."/>
            <person name="Milosavljevic A."/>
            <person name="Miner G.R."/>
            <person name="Morgan M.B."/>
            <person name="Nazareth L.V."/>
            <person name="Scott G."/>
            <person name="Sodergren E."/>
            <person name="Song X.-Z."/>
            <person name="Steffen D."/>
            <person name="Wei S."/>
            <person name="Wheeler D.A."/>
            <person name="Wright M.W."/>
            <person name="Worley K.C."/>
            <person name="Yuan Y."/>
            <person name="Zhang Z."/>
            <person name="Adams C.Q."/>
            <person name="Ansari-Lari M.A."/>
            <person name="Ayele M."/>
            <person name="Brown M.J."/>
            <person name="Chen G."/>
            <person name="Chen Z."/>
            <person name="Clendenning J."/>
            <person name="Clerc-Blankenburg K.P."/>
            <person name="Chen R."/>
            <person name="Chen Z."/>
            <person name="Davis C."/>
            <person name="Delgado O."/>
            <person name="Dinh H.H."/>
            <person name="Dong W."/>
            <person name="Draper H."/>
            <person name="Ernst S."/>
            <person name="Fu G."/>
            <person name="Gonzalez-Garay M.L."/>
            <person name="Garcia D.K."/>
            <person name="Gillett W."/>
            <person name="Gu J."/>
            <person name="Hao B."/>
            <person name="Haugen E."/>
            <person name="Havlak P."/>
            <person name="He X."/>
            <person name="Hennig S."/>
            <person name="Hu S."/>
            <person name="Huang W."/>
            <person name="Jackson L.R."/>
            <person name="Jacob L.S."/>
            <person name="Kelly S.H."/>
            <person name="Kube M."/>
            <person name="Levy R."/>
            <person name="Li Z."/>
            <person name="Liu B."/>
            <person name="Liu J."/>
            <person name="Liu W."/>
            <person name="Lu J."/>
            <person name="Maheshwari M."/>
            <person name="Nguyen B.-V."/>
            <person name="Okwuonu G.O."/>
            <person name="Palmeiri A."/>
            <person name="Pasternak S."/>
            <person name="Perez L.M."/>
            <person name="Phelps K.A."/>
            <person name="Plopper F.J."/>
            <person name="Qiang B."/>
            <person name="Raymond C."/>
            <person name="Rodriguez R."/>
            <person name="Saenphimmachak C."/>
            <person name="Santibanez J."/>
            <person name="Shen H."/>
            <person name="Shen Y."/>
            <person name="Subramanian S."/>
            <person name="Tabor P.E."/>
            <person name="Verduzco D."/>
            <person name="Waldron L."/>
            <person name="Wang J."/>
            <person name="Wang J."/>
            <person name="Wang Q."/>
            <person name="Williams G.A."/>
            <person name="Wong G.K.-S."/>
            <person name="Yao Z."/>
            <person name="Zhang J."/>
            <person name="Zhang X."/>
            <person name="Zhao G."/>
            <person name="Zhou J."/>
            <person name="Zhou Y."/>
            <person name="Nelson D."/>
            <person name="Lehrach H."/>
            <person name="Reinhardt R."/>
            <person name="Naylor S.L."/>
            <person name="Yang H."/>
            <person name="Olson M."/>
            <person name="Weinstock G."/>
            <person name="Gibbs R.A."/>
        </authorList>
    </citation>
    <scope>NUCLEOTIDE SEQUENCE [LARGE SCALE GENOMIC DNA]</scope>
</reference>
<reference key="6">
    <citation type="journal article" date="2004" name="Genome Res.">
        <title>The status, quality, and expansion of the NIH full-length cDNA project: the Mammalian Gene Collection (MGC).</title>
        <authorList>
            <consortium name="The MGC Project Team"/>
        </authorList>
    </citation>
    <scope>NUCLEOTIDE SEQUENCE [LARGE SCALE MRNA] (ISOFORM 1)</scope>
</reference>
<reference key="7">
    <citation type="journal article" date="2004" name="Protein Sci.">
        <title>Signal peptide prediction based on analysis of experimentally verified cleavage sites.</title>
        <authorList>
            <person name="Zhang Z."/>
            <person name="Henzel W.J."/>
        </authorList>
    </citation>
    <scope>PROTEIN SEQUENCE OF 18-32</scope>
</reference>
<reference key="8">
    <citation type="journal article" date="1996" name="J. Biol. Chem.">
        <title>Ligand activation of ELK receptor tyrosine kinase promotes its association with Grb10 and Grb2 in vascular endothelial cells.</title>
        <authorList>
            <person name="Stein E."/>
            <person name="Cerretti D.P."/>
            <person name="Daniel T.O."/>
        </authorList>
    </citation>
    <scope>INTERACTION WITH GRB2 AND GRB10</scope>
    <scope>MUTAGENESIS OF TYR-928</scope>
    <scope>PHOSPHORYLATION AT TYR-928</scope>
</reference>
<reference key="9">
    <citation type="journal article" date="1997" name="Cell">
        <title>Unified nomenclature for Eph family receptors and their ligands, the ephrins.</title>
        <authorList>
            <consortium name="Eph nomenclature committee"/>
        </authorList>
    </citation>
    <scope>NOMENCLATURE</scope>
</reference>
<reference key="10">
    <citation type="journal article" date="1998" name="Genes Dev.">
        <title>Eph receptors discriminate specific ligand oligomers to determine alternative signaling complexes, attachment, and assembly responses.</title>
        <authorList>
            <person name="Stein E."/>
            <person name="Lane A.A."/>
            <person name="Cerretti D.P."/>
            <person name="Schoecklmann H.O."/>
            <person name="Schroff A.D."/>
            <person name="Van Etten R.L."/>
            <person name="Daniel T.O."/>
        </authorList>
    </citation>
    <scope>FUNCTION IN ANGIOGENESIS</scope>
    <scope>FUNCTION IN CELL ADHESION</scope>
    <scope>INTERACTION WITH ACP1</scope>
    <scope>MUTAGENESIS OF TYR-928</scope>
</reference>
<reference key="11">
    <citation type="journal article" date="2002" name="J. Biol. Chem.">
        <title>The kinase-null EphB6 receptor undergoes transphosphorylation in a complex with EphB1.</title>
        <authorList>
            <person name="Freywald A."/>
            <person name="Sharfe N."/>
            <person name="Roifman C.M."/>
        </authorList>
    </citation>
    <scope>INTERACTION WITH EPHB6</scope>
</reference>
<reference key="12">
    <citation type="journal article" date="2002" name="J. Biol. Chem.">
        <title>EphB1 associates with Grb7 and regulates cell migration.</title>
        <authorList>
            <person name="Han D.C."/>
            <person name="Shen T.L."/>
            <person name="Miao H."/>
            <person name="Wang B."/>
            <person name="Guan J.L."/>
        </authorList>
    </citation>
    <scope>INTERACTION WITH GRB7</scope>
    <scope>FUNCTION</scope>
    <scope>PHOSPHORYLATION AT TYR-928</scope>
    <scope>MUTAGENESIS OF TYR-928</scope>
</reference>
<reference key="13">
    <citation type="journal article" date="2003" name="J. Cell Biol.">
        <title>EphB1 recruits c-Src and p52Shc to activate MAPK/ERK and promote chemotaxis.</title>
        <authorList>
            <person name="Vindis C."/>
            <person name="Cerretti D.P."/>
            <person name="Daniel T.O."/>
            <person name="Huynh-Do U."/>
        </authorList>
    </citation>
    <scope>FUNCTION IN CELL MIGRATION</scope>
    <scope>FUNCTION IN ERK CASCADE ACTIVATION</scope>
    <scope>INTERACTION WITH GRB2; SHC1 AND SRC</scope>
    <scope>MUTAGENESIS OF TYR-600 AND TYR-778</scope>
</reference>
<reference key="14">
    <citation type="journal article" date="2008" name="Traffic">
        <title>Ligand binding induces Cbl-dependent EphB1 receptor degradation through the lysosomal pathway.</title>
        <authorList>
            <person name="Fasen K."/>
            <person name="Cerretti D.P."/>
            <person name="Huynh-Do U."/>
        </authorList>
    </citation>
    <scope>FUNCTION IN ERK CASCADE ACTIVATION</scope>
    <scope>UBIQUITINATION BY CBL</scope>
    <scope>INTERACTION WITH CBL</scope>
    <scope>MUTAGENESIS OF LYS-651</scope>
    <scope>AUTOPHOSPHORYLATION</scope>
    <scope>IDENTIFICATION OF EFNB1 AS LIGAND</scope>
    <scope>SUBCELLULAR LOCATION</scope>
</reference>
<reference key="15">
    <citation type="submission" date="2007-07" db="PDB data bank">
        <title>Solution structure of the C-terminal SAM-domain of mouse ephrin type-B receptor 1 precursor (EC 2.7.1.112).</title>
        <authorList>
            <consortium name="RIKEN structural genomics initiative (RSGI)"/>
        </authorList>
    </citation>
    <scope>STRUCTURE BY NMR OF 899-984</scope>
</reference>
<reference key="16">
    <citation type="submission" date="2009-02" db="PDB data bank">
        <title>Solution structures of the FN3 domain of human ephrin type-B receptor 1.</title>
        <authorList>
            <consortium name="RIKEN structural genomics initiative (RSGI)"/>
        </authorList>
    </citation>
    <scope>STRUCTURE BY NMR OF 434-528</scope>
</reference>
<reference key="17">
    <citation type="journal article" date="2007" name="Nature">
        <title>Patterns of somatic mutation in human cancer genomes.</title>
        <authorList>
            <person name="Greenman C."/>
            <person name="Stephens P."/>
            <person name="Smith R."/>
            <person name="Dalgliesh G.L."/>
            <person name="Hunter C."/>
            <person name="Bignell G."/>
            <person name="Davies H."/>
            <person name="Teague J."/>
            <person name="Butler A."/>
            <person name="Stevens C."/>
            <person name="Edkins S."/>
            <person name="O'Meara S."/>
            <person name="Vastrik I."/>
            <person name="Schmidt E.E."/>
            <person name="Avis T."/>
            <person name="Barthorpe S."/>
            <person name="Bhamra G."/>
            <person name="Buck G."/>
            <person name="Choudhury B."/>
            <person name="Clements J."/>
            <person name="Cole J."/>
            <person name="Dicks E."/>
            <person name="Forbes S."/>
            <person name="Gray K."/>
            <person name="Halliday K."/>
            <person name="Harrison R."/>
            <person name="Hills K."/>
            <person name="Hinton J."/>
            <person name="Jenkinson A."/>
            <person name="Jones D."/>
            <person name="Menzies A."/>
            <person name="Mironenko T."/>
            <person name="Perry J."/>
            <person name="Raine K."/>
            <person name="Richardson D."/>
            <person name="Shepherd R."/>
            <person name="Small A."/>
            <person name="Tofts C."/>
            <person name="Varian J."/>
            <person name="Webb T."/>
            <person name="West S."/>
            <person name="Widaa S."/>
            <person name="Yates A."/>
            <person name="Cahill D.P."/>
            <person name="Louis D.N."/>
            <person name="Goldstraw P."/>
            <person name="Nicholson A.G."/>
            <person name="Brasseur F."/>
            <person name="Looijenga L."/>
            <person name="Weber B.L."/>
            <person name="Chiew Y.-E."/>
            <person name="DeFazio A."/>
            <person name="Greaves M.F."/>
            <person name="Green A.R."/>
            <person name="Campbell P."/>
            <person name="Birney E."/>
            <person name="Easton D.F."/>
            <person name="Chenevix-Trench G."/>
            <person name="Tan M.-H."/>
            <person name="Khoo S.K."/>
            <person name="Teh B.T."/>
            <person name="Yuen S.T."/>
            <person name="Leung S.Y."/>
            <person name="Wooster R."/>
            <person name="Futreal P.A."/>
            <person name="Stratton M.R."/>
        </authorList>
    </citation>
    <scope>VARIANTS [LARGE SCALE ANALYSIS] VAL-18; MET-387; THR-707; VAL-719; GLN-743; THR-912 AND MET-981</scope>
</reference>
<gene>
    <name type="primary">EPHB1</name>
    <name type="synonym">ELK</name>
    <name type="synonym">EPHT2</name>
    <name type="synonym">HEK6</name>
    <name type="synonym">NET</name>
</gene>